<sequence length="138" mass="15656">MWYQKTLTLSAKSRGFHLVTDEILNQLADMPRVNIGLLHLLLQHTSASLTLNENCDPTVRHDMERFFLRTVPDNGNYEHDYEGADDMPSHIKSSMLGTSLVLPVHKGRIQTGTWQGIWLGEHRIHGGSRRIIATLQGE</sequence>
<reference key="1">
    <citation type="journal article" date="2001" name="Nature">
        <title>Genome sequence of enterohaemorrhagic Escherichia coli O157:H7.</title>
        <authorList>
            <person name="Perna N.T."/>
            <person name="Plunkett G. III"/>
            <person name="Burland V."/>
            <person name="Mau B."/>
            <person name="Glasner J.D."/>
            <person name="Rose D.J."/>
            <person name="Mayhew G.F."/>
            <person name="Evans P.S."/>
            <person name="Gregor J."/>
            <person name="Kirkpatrick H.A."/>
            <person name="Posfai G."/>
            <person name="Hackett J."/>
            <person name="Klink S."/>
            <person name="Boutin A."/>
            <person name="Shao Y."/>
            <person name="Miller L."/>
            <person name="Grotbeck E.J."/>
            <person name="Davis N.W."/>
            <person name="Lim A."/>
            <person name="Dimalanta E.T."/>
            <person name="Potamousis K."/>
            <person name="Apodaca J."/>
            <person name="Anantharaman T.S."/>
            <person name="Lin J."/>
            <person name="Yen G."/>
            <person name="Schwartz D.C."/>
            <person name="Welch R.A."/>
            <person name="Blattner F.R."/>
        </authorList>
    </citation>
    <scope>NUCLEOTIDE SEQUENCE [LARGE SCALE GENOMIC DNA]</scope>
    <source>
        <strain>O157:H7 / EDL933 / ATCC 700927 / EHEC</strain>
    </source>
</reference>
<reference key="2">
    <citation type="journal article" date="2001" name="DNA Res.">
        <title>Complete genome sequence of enterohemorrhagic Escherichia coli O157:H7 and genomic comparison with a laboratory strain K-12.</title>
        <authorList>
            <person name="Hayashi T."/>
            <person name="Makino K."/>
            <person name="Ohnishi M."/>
            <person name="Kurokawa K."/>
            <person name="Ishii K."/>
            <person name="Yokoyama K."/>
            <person name="Han C.-G."/>
            <person name="Ohtsubo E."/>
            <person name="Nakayama K."/>
            <person name="Murata T."/>
            <person name="Tanaka M."/>
            <person name="Tobe T."/>
            <person name="Iida T."/>
            <person name="Takami H."/>
            <person name="Honda T."/>
            <person name="Sasakawa C."/>
            <person name="Ogasawara N."/>
            <person name="Yasunaga T."/>
            <person name="Kuhara S."/>
            <person name="Shiba T."/>
            <person name="Hattori M."/>
            <person name="Shinagawa H."/>
        </authorList>
    </citation>
    <scope>NUCLEOTIDE SEQUENCE [LARGE SCALE GENOMIC DNA]</scope>
    <source>
        <strain>O157:H7 / Sakai / RIMD 0509952 / EHEC</strain>
    </source>
</reference>
<protein>
    <recommendedName>
        <fullName>UPF0047 protein YjbQ</fullName>
    </recommendedName>
</protein>
<feature type="chain" id="PRO_0000088516" description="UPF0047 protein YjbQ">
    <location>
        <begin position="1"/>
        <end position="138"/>
    </location>
</feature>
<gene>
    <name type="primary">yjbQ</name>
    <name type="ordered locus">Z5655</name>
    <name type="ordered locus">ECs5038</name>
</gene>
<dbReference type="EMBL" id="AE005174">
    <property type="protein sequence ID" value="AAG59254.1"/>
    <property type="molecule type" value="Genomic_DNA"/>
</dbReference>
<dbReference type="EMBL" id="BA000007">
    <property type="protein sequence ID" value="BAB38461.1"/>
    <property type="molecule type" value="Genomic_DNA"/>
</dbReference>
<dbReference type="PIR" id="B86099">
    <property type="entry name" value="B86099"/>
</dbReference>
<dbReference type="PIR" id="F91258">
    <property type="entry name" value="F91258"/>
</dbReference>
<dbReference type="RefSeq" id="NP_313065.1">
    <property type="nucleotide sequence ID" value="NC_002695.1"/>
</dbReference>
<dbReference type="RefSeq" id="WP_000270375.1">
    <property type="nucleotide sequence ID" value="NZ_VOAI01000008.1"/>
</dbReference>
<dbReference type="SMR" id="P0AF49"/>
<dbReference type="STRING" id="155864.Z5655"/>
<dbReference type="GeneID" id="914297"/>
<dbReference type="KEGG" id="ece:Z5655"/>
<dbReference type="KEGG" id="ecs:ECs_5038"/>
<dbReference type="PATRIC" id="fig|386585.9.peg.5261"/>
<dbReference type="eggNOG" id="COG0432">
    <property type="taxonomic scope" value="Bacteria"/>
</dbReference>
<dbReference type="HOGENOM" id="CLU_096980_0_2_6"/>
<dbReference type="OMA" id="TWQGIFF"/>
<dbReference type="Proteomes" id="UP000000558">
    <property type="component" value="Chromosome"/>
</dbReference>
<dbReference type="Proteomes" id="UP000002519">
    <property type="component" value="Chromosome"/>
</dbReference>
<dbReference type="Gene3D" id="2.60.120.460">
    <property type="entry name" value="YjbQ-like"/>
    <property type="match status" value="1"/>
</dbReference>
<dbReference type="InterPro" id="IPR001602">
    <property type="entry name" value="UPF0047_YjbQ-like"/>
</dbReference>
<dbReference type="InterPro" id="IPR035917">
    <property type="entry name" value="YjbQ-like_sf"/>
</dbReference>
<dbReference type="NCBIfam" id="TIGR00149">
    <property type="entry name" value="TIGR00149_YjbQ"/>
    <property type="match status" value="1"/>
</dbReference>
<dbReference type="PANTHER" id="PTHR30615">
    <property type="entry name" value="UNCHARACTERIZED PROTEIN YJBQ-RELATED"/>
    <property type="match status" value="1"/>
</dbReference>
<dbReference type="PANTHER" id="PTHR30615:SF8">
    <property type="entry name" value="UPF0047 PROTEIN C4A8.02C"/>
    <property type="match status" value="1"/>
</dbReference>
<dbReference type="Pfam" id="PF01894">
    <property type="entry name" value="UPF0047"/>
    <property type="match status" value="1"/>
</dbReference>
<dbReference type="PIRSF" id="PIRSF004681">
    <property type="entry name" value="UCP004681"/>
    <property type="match status" value="1"/>
</dbReference>
<dbReference type="SUPFAM" id="SSF111038">
    <property type="entry name" value="YjbQ-like"/>
    <property type="match status" value="1"/>
</dbReference>
<dbReference type="PROSITE" id="PS01314">
    <property type="entry name" value="UPF0047"/>
    <property type="match status" value="1"/>
</dbReference>
<accession>P0AF49</accession>
<accession>P32698</accession>
<keyword id="KW-1185">Reference proteome</keyword>
<name>YJBQ_ECO57</name>
<comment type="similarity">
    <text evidence="1">Belongs to the UPF0047 family.</text>
</comment>
<proteinExistence type="inferred from homology"/>
<evidence type="ECO:0000305" key="1"/>
<organism>
    <name type="scientific">Escherichia coli O157:H7</name>
    <dbReference type="NCBI Taxonomy" id="83334"/>
    <lineage>
        <taxon>Bacteria</taxon>
        <taxon>Pseudomonadati</taxon>
        <taxon>Pseudomonadota</taxon>
        <taxon>Gammaproteobacteria</taxon>
        <taxon>Enterobacterales</taxon>
        <taxon>Enterobacteriaceae</taxon>
        <taxon>Escherichia</taxon>
    </lineage>
</organism>